<sequence length="140" mass="15952">MGRVRTKTVKKSSRQVIEKYYSRMTLDFHTNKKILEEVAIIPSKRLRNKIAGFSTHLMKRIQKGPVRGISLKLQEEERERRMDFVPDESAIKTDEIKVDKETLEMLASLGMSDTSGISAVEPQQAMAPIAAFGGRAPRRY</sequence>
<feature type="chain" id="PRO_0000141539" description="Small ribosomal subunit protein eS17y">
    <location>
        <begin position="1"/>
        <end position="140"/>
    </location>
</feature>
<name>RS172_ARATH</name>
<reference key="1">
    <citation type="journal article" date="1999" name="Nature">
        <title>Sequence and analysis of chromosome 2 of the plant Arabidopsis thaliana.</title>
        <authorList>
            <person name="Lin X."/>
            <person name="Kaul S."/>
            <person name="Rounsley S.D."/>
            <person name="Shea T.P."/>
            <person name="Benito M.-I."/>
            <person name="Town C.D."/>
            <person name="Fujii C.Y."/>
            <person name="Mason T.M."/>
            <person name="Bowman C.L."/>
            <person name="Barnstead M.E."/>
            <person name="Feldblyum T.V."/>
            <person name="Buell C.R."/>
            <person name="Ketchum K.A."/>
            <person name="Lee J.J."/>
            <person name="Ronning C.M."/>
            <person name="Koo H.L."/>
            <person name="Moffat K.S."/>
            <person name="Cronin L.A."/>
            <person name="Shen M."/>
            <person name="Pai G."/>
            <person name="Van Aken S."/>
            <person name="Umayam L."/>
            <person name="Tallon L.J."/>
            <person name="Gill J.E."/>
            <person name="Adams M.D."/>
            <person name="Carrera A.J."/>
            <person name="Creasy T.H."/>
            <person name="Goodman H.M."/>
            <person name="Somerville C.R."/>
            <person name="Copenhaver G.P."/>
            <person name="Preuss D."/>
            <person name="Nierman W.C."/>
            <person name="White O."/>
            <person name="Eisen J.A."/>
            <person name="Salzberg S.L."/>
            <person name="Fraser C.M."/>
            <person name="Venter J.C."/>
        </authorList>
    </citation>
    <scope>NUCLEOTIDE SEQUENCE [LARGE SCALE GENOMIC DNA]</scope>
    <source>
        <strain>cv. Columbia</strain>
    </source>
</reference>
<reference key="2">
    <citation type="journal article" date="2017" name="Plant J.">
        <title>Araport11: a complete reannotation of the Arabidopsis thaliana reference genome.</title>
        <authorList>
            <person name="Cheng C.Y."/>
            <person name="Krishnakumar V."/>
            <person name="Chan A.P."/>
            <person name="Thibaud-Nissen F."/>
            <person name="Schobel S."/>
            <person name="Town C.D."/>
        </authorList>
    </citation>
    <scope>GENOME REANNOTATION</scope>
    <source>
        <strain>cv. Columbia</strain>
    </source>
</reference>
<reference key="3">
    <citation type="journal article" date="2003" name="Science">
        <title>Empirical analysis of transcriptional activity in the Arabidopsis genome.</title>
        <authorList>
            <person name="Yamada K."/>
            <person name="Lim J."/>
            <person name="Dale J.M."/>
            <person name="Chen H."/>
            <person name="Shinn P."/>
            <person name="Palm C.J."/>
            <person name="Southwick A.M."/>
            <person name="Wu H.C."/>
            <person name="Kim C.J."/>
            <person name="Nguyen M."/>
            <person name="Pham P.K."/>
            <person name="Cheuk R.F."/>
            <person name="Karlin-Newmann G."/>
            <person name="Liu S.X."/>
            <person name="Lam B."/>
            <person name="Sakano H."/>
            <person name="Wu T."/>
            <person name="Yu G."/>
            <person name="Miranda M."/>
            <person name="Quach H.L."/>
            <person name="Tripp M."/>
            <person name="Chang C.H."/>
            <person name="Lee J.M."/>
            <person name="Toriumi M.J."/>
            <person name="Chan M.M."/>
            <person name="Tang C.C."/>
            <person name="Onodera C.S."/>
            <person name="Deng J.M."/>
            <person name="Akiyama K."/>
            <person name="Ansari Y."/>
            <person name="Arakawa T."/>
            <person name="Banh J."/>
            <person name="Banno F."/>
            <person name="Bowser L."/>
            <person name="Brooks S.Y."/>
            <person name="Carninci P."/>
            <person name="Chao Q."/>
            <person name="Choy N."/>
            <person name="Enju A."/>
            <person name="Goldsmith A.D."/>
            <person name="Gurjal M."/>
            <person name="Hansen N.F."/>
            <person name="Hayashizaki Y."/>
            <person name="Johnson-Hopson C."/>
            <person name="Hsuan V.W."/>
            <person name="Iida K."/>
            <person name="Karnes M."/>
            <person name="Khan S."/>
            <person name="Koesema E."/>
            <person name="Ishida J."/>
            <person name="Jiang P.X."/>
            <person name="Jones T."/>
            <person name="Kawai J."/>
            <person name="Kamiya A."/>
            <person name="Meyers C."/>
            <person name="Nakajima M."/>
            <person name="Narusaka M."/>
            <person name="Seki M."/>
            <person name="Sakurai T."/>
            <person name="Satou M."/>
            <person name="Tamse R."/>
            <person name="Vaysberg M."/>
            <person name="Wallender E.K."/>
            <person name="Wong C."/>
            <person name="Yamamura Y."/>
            <person name="Yuan S."/>
            <person name="Shinozaki K."/>
            <person name="Davis R.W."/>
            <person name="Theologis A."/>
            <person name="Ecker J.R."/>
        </authorList>
    </citation>
    <scope>NUCLEOTIDE SEQUENCE [LARGE SCALE MRNA]</scope>
    <source>
        <strain>cv. Columbia</strain>
    </source>
</reference>
<reference key="4">
    <citation type="journal article" date="2023" name="Plant Cell">
        <title>An updated nomenclature for plant ribosomal protein genes.</title>
        <authorList>
            <person name="Scarpin M.R."/>
            <person name="Busche M."/>
            <person name="Martinez R.E."/>
            <person name="Harper L.C."/>
            <person name="Reiser L."/>
            <person name="Szakonyi D."/>
            <person name="Merchante C."/>
            <person name="Lan T."/>
            <person name="Xiong W."/>
            <person name="Mo B."/>
            <person name="Tang G."/>
            <person name="Chen X."/>
            <person name="Bailey-Serres J."/>
            <person name="Browning K.S."/>
            <person name="Brunkard J.O."/>
        </authorList>
    </citation>
    <scope>NOMENCLATURE</scope>
</reference>
<reference key="5">
    <citation type="journal article" date="2001" name="Plant Physiol.">
        <title>The organization of cytoplasmic ribosomal protein genes in the Arabidopsis genome.</title>
        <authorList>
            <person name="Barakat A."/>
            <person name="Szick-Miranda K."/>
            <person name="Chang I.-F."/>
            <person name="Guyot R."/>
            <person name="Blanc G."/>
            <person name="Cooke R."/>
            <person name="Delseny M."/>
            <person name="Bailey-Serres J."/>
        </authorList>
    </citation>
    <scope>GENE FAMILY ORGANIZATION</scope>
    <scope>NOMENCLATURE</scope>
</reference>
<accession>Q9SJ36</accession>
<accession>Q94K44</accession>
<dbReference type="EMBL" id="AC007018">
    <property type="protein sequence ID" value="AAD29060.2"/>
    <property type="molecule type" value="Genomic_DNA"/>
</dbReference>
<dbReference type="EMBL" id="CP002685">
    <property type="protein sequence ID" value="AEC05907.1"/>
    <property type="molecule type" value="Genomic_DNA"/>
</dbReference>
<dbReference type="EMBL" id="CP002685">
    <property type="protein sequence ID" value="AEC05908.1"/>
    <property type="molecule type" value="Genomic_DNA"/>
</dbReference>
<dbReference type="EMBL" id="AF370312">
    <property type="protein sequence ID" value="AAK44127.1"/>
    <property type="molecule type" value="mRNA"/>
</dbReference>
<dbReference type="EMBL" id="AY063098">
    <property type="protein sequence ID" value="AAL34272.1"/>
    <property type="molecule type" value="mRNA"/>
</dbReference>
<dbReference type="EMBL" id="BT002068">
    <property type="protein sequence ID" value="AAN72079.1"/>
    <property type="molecule type" value="mRNA"/>
</dbReference>
<dbReference type="EMBL" id="BT006533">
    <property type="protein sequence ID" value="AAP21341.1"/>
    <property type="molecule type" value="mRNA"/>
</dbReference>
<dbReference type="PIR" id="B84466">
    <property type="entry name" value="B84466"/>
</dbReference>
<dbReference type="RefSeq" id="NP_001031325.1">
    <property type="nucleotide sequence ID" value="NM_001036248.1"/>
</dbReference>
<dbReference type="RefSeq" id="NP_565320.1">
    <property type="nucleotide sequence ID" value="NM_126548.5"/>
</dbReference>
<dbReference type="SMR" id="Q9SJ36"/>
<dbReference type="BioGRID" id="470">
    <property type="interactions" value="46"/>
</dbReference>
<dbReference type="FunCoup" id="Q9SJ36">
    <property type="interactions" value="3097"/>
</dbReference>
<dbReference type="STRING" id="3702.Q9SJ36"/>
<dbReference type="PaxDb" id="3702-AT2G05220.2"/>
<dbReference type="ProteomicsDB" id="226864"/>
<dbReference type="EnsemblPlants" id="AT2G05220.1">
    <property type="protein sequence ID" value="AT2G05220.1"/>
    <property type="gene ID" value="AT2G05220"/>
</dbReference>
<dbReference type="EnsemblPlants" id="AT2G05220.2">
    <property type="protein sequence ID" value="AT2G05220.2"/>
    <property type="gene ID" value="AT2G05220"/>
</dbReference>
<dbReference type="GeneID" id="815070"/>
<dbReference type="Gramene" id="AT2G05220.1">
    <property type="protein sequence ID" value="AT2G05220.1"/>
    <property type="gene ID" value="AT2G05220"/>
</dbReference>
<dbReference type="Gramene" id="AT2G05220.2">
    <property type="protein sequence ID" value="AT2G05220.2"/>
    <property type="gene ID" value="AT2G05220"/>
</dbReference>
<dbReference type="KEGG" id="ath:AT2G05220"/>
<dbReference type="Araport" id="AT2G05220"/>
<dbReference type="TAIR" id="AT2G05220"/>
<dbReference type="eggNOG" id="KOG0187">
    <property type="taxonomic scope" value="Eukaryota"/>
</dbReference>
<dbReference type="HOGENOM" id="CLU_112958_2_0_1"/>
<dbReference type="InParanoid" id="Q9SJ36"/>
<dbReference type="OMA" id="KFWILAV"/>
<dbReference type="OrthoDB" id="1727351at2759"/>
<dbReference type="PhylomeDB" id="Q9SJ36"/>
<dbReference type="CD-CODE" id="4299E36E">
    <property type="entry name" value="Nucleolus"/>
</dbReference>
<dbReference type="PRO" id="PR:Q9SJ36"/>
<dbReference type="Proteomes" id="UP000006548">
    <property type="component" value="Chromosome 2"/>
</dbReference>
<dbReference type="ExpressionAtlas" id="Q9SJ36">
    <property type="expression patterns" value="baseline and differential"/>
</dbReference>
<dbReference type="GO" id="GO:0022627">
    <property type="term" value="C:cytosolic small ribosomal subunit"/>
    <property type="evidence" value="ECO:0007005"/>
    <property type="project" value="TAIR"/>
</dbReference>
<dbReference type="GO" id="GO:0005739">
    <property type="term" value="C:mitochondrion"/>
    <property type="evidence" value="ECO:0007005"/>
    <property type="project" value="TAIR"/>
</dbReference>
<dbReference type="GO" id="GO:0003729">
    <property type="term" value="F:mRNA binding"/>
    <property type="evidence" value="ECO:0000314"/>
    <property type="project" value="TAIR"/>
</dbReference>
<dbReference type="GO" id="GO:0003735">
    <property type="term" value="F:structural constituent of ribosome"/>
    <property type="evidence" value="ECO:0000314"/>
    <property type="project" value="CAFA"/>
</dbReference>
<dbReference type="GO" id="GO:0006412">
    <property type="term" value="P:translation"/>
    <property type="evidence" value="ECO:0007669"/>
    <property type="project" value="InterPro"/>
</dbReference>
<dbReference type="FunFam" id="1.10.60.20:FF:000001">
    <property type="entry name" value="40S ribosomal protein S17"/>
    <property type="match status" value="1"/>
</dbReference>
<dbReference type="Gene3D" id="1.10.60.20">
    <property type="entry name" value="Ribosomal protein S17e-like"/>
    <property type="match status" value="1"/>
</dbReference>
<dbReference type="HAMAP" id="MF_00511">
    <property type="entry name" value="Ribosomal_eS17"/>
    <property type="match status" value="1"/>
</dbReference>
<dbReference type="InterPro" id="IPR001210">
    <property type="entry name" value="Ribosomal_eS17"/>
</dbReference>
<dbReference type="InterPro" id="IPR018273">
    <property type="entry name" value="Ribosomal_eS17_CS"/>
</dbReference>
<dbReference type="InterPro" id="IPR036401">
    <property type="entry name" value="Ribosomal_eS17_sf"/>
</dbReference>
<dbReference type="PANTHER" id="PTHR10732">
    <property type="entry name" value="40S RIBOSOMAL PROTEIN S17"/>
    <property type="match status" value="1"/>
</dbReference>
<dbReference type="PANTHER" id="PTHR10732:SF7">
    <property type="entry name" value="SMALL RIBOSOMAL SUBUNIT PROTEIN ES17X-RELATED"/>
    <property type="match status" value="1"/>
</dbReference>
<dbReference type="Pfam" id="PF00833">
    <property type="entry name" value="Ribosomal_S17e"/>
    <property type="match status" value="1"/>
</dbReference>
<dbReference type="SUPFAM" id="SSF116820">
    <property type="entry name" value="Rps17e-like"/>
    <property type="match status" value="1"/>
</dbReference>
<dbReference type="PROSITE" id="PS00712">
    <property type="entry name" value="RIBOSOMAL_S17E"/>
    <property type="match status" value="1"/>
</dbReference>
<gene>
    <name type="primary">RPS17B</name>
    <name type="ordered locus">At2g05220</name>
    <name type="ORF">F5G3.12</name>
</gene>
<organism>
    <name type="scientific">Arabidopsis thaliana</name>
    <name type="common">Mouse-ear cress</name>
    <dbReference type="NCBI Taxonomy" id="3702"/>
    <lineage>
        <taxon>Eukaryota</taxon>
        <taxon>Viridiplantae</taxon>
        <taxon>Streptophyta</taxon>
        <taxon>Embryophyta</taxon>
        <taxon>Tracheophyta</taxon>
        <taxon>Spermatophyta</taxon>
        <taxon>Magnoliopsida</taxon>
        <taxon>eudicotyledons</taxon>
        <taxon>Gunneridae</taxon>
        <taxon>Pentapetalae</taxon>
        <taxon>rosids</taxon>
        <taxon>malvids</taxon>
        <taxon>Brassicales</taxon>
        <taxon>Brassicaceae</taxon>
        <taxon>Camelineae</taxon>
        <taxon>Arabidopsis</taxon>
    </lineage>
</organism>
<evidence type="ECO:0000303" key="1">
    <source>
    </source>
</evidence>
<evidence type="ECO:0000305" key="2"/>
<protein>
    <recommendedName>
        <fullName evidence="1">Small ribosomal subunit protein eS17y</fullName>
    </recommendedName>
    <alternativeName>
        <fullName>40S ribosomal protein S17-2</fullName>
    </alternativeName>
</protein>
<keyword id="KW-1185">Reference proteome</keyword>
<keyword id="KW-0687">Ribonucleoprotein</keyword>
<keyword id="KW-0689">Ribosomal protein</keyword>
<comment type="similarity">
    <text evidence="2">Belongs to the eukaryotic ribosomal protein eS17 family.</text>
</comment>
<proteinExistence type="evidence at transcript level"/>